<gene>
    <name type="primary">FYV10</name>
    <name type="ORF">SNOG_15382</name>
</gene>
<feature type="chain" id="PRO_0000292464" description="Protein FYV10">
    <location>
        <begin position="1"/>
        <end position="405"/>
    </location>
</feature>
<feature type="domain" description="LisH" evidence="3">
    <location>
        <begin position="124"/>
        <end position="156"/>
    </location>
</feature>
<feature type="domain" description="CTLH" evidence="2">
    <location>
        <begin position="162"/>
        <end position="220"/>
    </location>
</feature>
<feature type="zinc finger region" description="RING-Gid-type" evidence="4">
    <location>
        <begin position="326"/>
        <end position="387"/>
    </location>
</feature>
<evidence type="ECO:0000250" key="1"/>
<evidence type="ECO:0000255" key="2">
    <source>
        <dbReference type="PROSITE-ProRule" id="PRU00058"/>
    </source>
</evidence>
<evidence type="ECO:0000255" key="3">
    <source>
        <dbReference type="PROSITE-ProRule" id="PRU00126"/>
    </source>
</evidence>
<evidence type="ECO:0000255" key="4">
    <source>
        <dbReference type="PROSITE-ProRule" id="PRU01215"/>
    </source>
</evidence>
<evidence type="ECO:0000305" key="5"/>
<protein>
    <recommendedName>
        <fullName>Protein FYV10</fullName>
    </recommendedName>
</protein>
<keyword id="KW-0963">Cytoplasm</keyword>
<keyword id="KW-0479">Metal-binding</keyword>
<keyword id="KW-0539">Nucleus</keyword>
<keyword id="KW-0862">Zinc</keyword>
<keyword id="KW-0863">Zinc-finger</keyword>
<accession>Q0TYW1</accession>
<proteinExistence type="inferred from homology"/>
<comment type="function">
    <text evidence="1">Involved in the proteasome-dependent degradation of fructose-1,6-bisphosphatase.</text>
</comment>
<comment type="subcellular location">
    <subcellularLocation>
        <location evidence="1">Cytoplasm</location>
    </subcellularLocation>
    <subcellularLocation>
        <location evidence="1">Nucleus</location>
    </subcellularLocation>
</comment>
<comment type="similarity">
    <text evidence="5">Belongs to the FYV10 family.</text>
</comment>
<comment type="sequence caution" evidence="5">
    <conflict type="erroneous gene model prediction">
        <sequence resource="EMBL-CDS" id="EAT77315"/>
    </conflict>
</comment>
<sequence length="405" mass="45418">MAELTSMKLNAESHLLLDQPLLRMPYELSRRNFKNAQRVIEHSSANMTTSLAAATKAASKSASPDATLDSLDAMISKMQVLKRKLEGLHEEETRIHKSAKARLRHLQDLYDVNSLVDVKYDEWSRTRLSRLLVDYLLREGYSESAAHLAQSKEIEDLVDVDAFIACHKIERSLREGMSTSLALDWCKEHSKELKKGGSMLEFELRLQQYIELVRQGGETKLVEARVHAKKYLSTSGDFELLRKAAGLLAYKPWDDVEPYVSLYSPSRWAHLANLFLSTHHNLYSLPPRPLLHIALSAGLSALKTPACHSAYTSSSANASSATTSVCPICSTELNELARNVPYAHHTKSIVKNDPVVLPNGRIYGRDQLTAFNKKVGTESGWVRDPVDGIKGEAWSESEVRKVYIM</sequence>
<dbReference type="EMBL" id="CH445361">
    <property type="protein sequence ID" value="EAT77315.2"/>
    <property type="status" value="ALT_SEQ"/>
    <property type="molecule type" value="Genomic_DNA"/>
</dbReference>
<dbReference type="RefSeq" id="XP_001805532.1">
    <property type="nucleotide sequence ID" value="XM_001805480.1"/>
</dbReference>
<dbReference type="SMR" id="Q0TYW1"/>
<dbReference type="FunCoup" id="Q0TYW1">
    <property type="interactions" value="853"/>
</dbReference>
<dbReference type="STRING" id="321614.Q0TYW1"/>
<dbReference type="GeneID" id="5982461"/>
<dbReference type="KEGG" id="pno:SNOG_15382"/>
<dbReference type="VEuPathDB" id="FungiDB:JI435_153820"/>
<dbReference type="eggNOG" id="KOG0396">
    <property type="taxonomic scope" value="Eukaryota"/>
</dbReference>
<dbReference type="InParanoid" id="Q0TYW1"/>
<dbReference type="Proteomes" id="UP000001055">
    <property type="component" value="Unassembled WGS sequence"/>
</dbReference>
<dbReference type="GO" id="GO:0005737">
    <property type="term" value="C:cytoplasm"/>
    <property type="evidence" value="ECO:0000318"/>
    <property type="project" value="GO_Central"/>
</dbReference>
<dbReference type="GO" id="GO:0034657">
    <property type="term" value="C:GID complex"/>
    <property type="evidence" value="ECO:0000318"/>
    <property type="project" value="GO_Central"/>
</dbReference>
<dbReference type="GO" id="GO:0005634">
    <property type="term" value="C:nucleus"/>
    <property type="evidence" value="ECO:0000318"/>
    <property type="project" value="GO_Central"/>
</dbReference>
<dbReference type="GO" id="GO:0061630">
    <property type="term" value="F:ubiquitin protein ligase activity"/>
    <property type="evidence" value="ECO:0007669"/>
    <property type="project" value="InterPro"/>
</dbReference>
<dbReference type="GO" id="GO:0008270">
    <property type="term" value="F:zinc ion binding"/>
    <property type="evidence" value="ECO:0007669"/>
    <property type="project" value="UniProtKB-KW"/>
</dbReference>
<dbReference type="GO" id="GO:0045721">
    <property type="term" value="P:negative regulation of gluconeogenesis"/>
    <property type="evidence" value="ECO:0007669"/>
    <property type="project" value="UniProtKB-ARBA"/>
</dbReference>
<dbReference type="GO" id="GO:0043161">
    <property type="term" value="P:proteasome-mediated ubiquitin-dependent protein catabolic process"/>
    <property type="evidence" value="ECO:0000318"/>
    <property type="project" value="GO_Central"/>
</dbReference>
<dbReference type="InterPro" id="IPR013144">
    <property type="entry name" value="CRA_dom"/>
</dbReference>
<dbReference type="InterPro" id="IPR024964">
    <property type="entry name" value="CTLH/CRA"/>
</dbReference>
<dbReference type="InterPro" id="IPR006595">
    <property type="entry name" value="CTLH_C"/>
</dbReference>
<dbReference type="InterPro" id="IPR045098">
    <property type="entry name" value="Fyv10_fam"/>
</dbReference>
<dbReference type="InterPro" id="IPR006594">
    <property type="entry name" value="LisH"/>
</dbReference>
<dbReference type="InterPro" id="IPR044063">
    <property type="entry name" value="ZF_RING_GID"/>
</dbReference>
<dbReference type="PANTHER" id="PTHR12170:SF2">
    <property type="entry name" value="E3 UBIQUITIN-PROTEIN TRANSFERASE MAEA"/>
    <property type="match status" value="1"/>
</dbReference>
<dbReference type="PANTHER" id="PTHR12170">
    <property type="entry name" value="MACROPHAGE ERYTHROBLAST ATTACHER-RELATED"/>
    <property type="match status" value="1"/>
</dbReference>
<dbReference type="Pfam" id="PF10607">
    <property type="entry name" value="CTLH"/>
    <property type="match status" value="1"/>
</dbReference>
<dbReference type="SMART" id="SM00757">
    <property type="entry name" value="CRA"/>
    <property type="match status" value="1"/>
</dbReference>
<dbReference type="SMART" id="SM00668">
    <property type="entry name" value="CTLH"/>
    <property type="match status" value="1"/>
</dbReference>
<dbReference type="PROSITE" id="PS50897">
    <property type="entry name" value="CTLH"/>
    <property type="match status" value="1"/>
</dbReference>
<dbReference type="PROSITE" id="PS50896">
    <property type="entry name" value="LISH"/>
    <property type="match status" value="1"/>
</dbReference>
<dbReference type="PROSITE" id="PS51867">
    <property type="entry name" value="ZF_RING_GID"/>
    <property type="match status" value="1"/>
</dbReference>
<reference key="1">
    <citation type="journal article" date="2007" name="Plant Cell">
        <title>Dothideomycete-plant interactions illuminated by genome sequencing and EST analysis of the wheat pathogen Stagonospora nodorum.</title>
        <authorList>
            <person name="Hane J.K."/>
            <person name="Lowe R.G.T."/>
            <person name="Solomon P.S."/>
            <person name="Tan K.-C."/>
            <person name="Schoch C.L."/>
            <person name="Spatafora J.W."/>
            <person name="Crous P.W."/>
            <person name="Kodira C.D."/>
            <person name="Birren B.W."/>
            <person name="Galagan J.E."/>
            <person name="Torriani S.F.F."/>
            <person name="McDonald B.A."/>
            <person name="Oliver R.P."/>
        </authorList>
    </citation>
    <scope>NUCLEOTIDE SEQUENCE [LARGE SCALE GENOMIC DNA]</scope>
    <source>
        <strain>SN15 / ATCC MYA-4574 / FGSC 10173</strain>
    </source>
</reference>
<organism>
    <name type="scientific">Phaeosphaeria nodorum (strain SN15 / ATCC MYA-4574 / FGSC 10173)</name>
    <name type="common">Glume blotch fungus</name>
    <name type="synonym">Parastagonospora nodorum</name>
    <dbReference type="NCBI Taxonomy" id="321614"/>
    <lineage>
        <taxon>Eukaryota</taxon>
        <taxon>Fungi</taxon>
        <taxon>Dikarya</taxon>
        <taxon>Ascomycota</taxon>
        <taxon>Pezizomycotina</taxon>
        <taxon>Dothideomycetes</taxon>
        <taxon>Pleosporomycetidae</taxon>
        <taxon>Pleosporales</taxon>
        <taxon>Pleosporineae</taxon>
        <taxon>Phaeosphaeriaceae</taxon>
        <taxon>Parastagonospora</taxon>
    </lineage>
</organism>
<name>FYV10_PHANO</name>